<comment type="function">
    <text evidence="1">Involved in cell fusion during mating by stabilizing the plasma membrane fusion event.</text>
</comment>
<comment type="subcellular location">
    <subcellularLocation>
        <location evidence="1">Cell membrane</location>
        <topology evidence="1">Multi-pass membrane protein</topology>
    </subcellularLocation>
</comment>
<comment type="similarity">
    <text evidence="4">Belongs to the PRM1 family.</text>
</comment>
<organism>
    <name type="scientific">Aspergillus niger (strain ATCC MYA-4892 / CBS 513.88 / FGSC A1513)</name>
    <dbReference type="NCBI Taxonomy" id="425011"/>
    <lineage>
        <taxon>Eukaryota</taxon>
        <taxon>Fungi</taxon>
        <taxon>Dikarya</taxon>
        <taxon>Ascomycota</taxon>
        <taxon>Pezizomycotina</taxon>
        <taxon>Eurotiomycetes</taxon>
        <taxon>Eurotiomycetidae</taxon>
        <taxon>Eurotiales</taxon>
        <taxon>Aspergillaceae</taxon>
        <taxon>Aspergillus</taxon>
        <taxon>Aspergillus subgen. Circumdati</taxon>
    </lineage>
</organism>
<protein>
    <recommendedName>
        <fullName>Plasma membrane fusion protein prm1</fullName>
    </recommendedName>
</protein>
<sequence length="739" mass="80532">MLFSKSGRTIFPLLPPYGVQDPNGVQGRVIPVHPDGSTPYLGLRARLSQVWLNRWTVLLLLVLARVLMAASSIKTDMNRAKSEALSACTSVESMGDAMVSMPHYLAEGVNELTADGVNAAIDGLKMLLMLTLTGVEELVIFFVKVMYQTYLCLFTLVVHGVVDVGLSLIEDVTDVLNSTVKTVAKDIAKVTETFEDDYNTLISKINGVASLFGGSVPTLNISSEIDKLENVQLSSSIDKDLQKINDSIPNFNEVMNFTENVIRFPFDEVKKLVNESLGNYTFNASALPVPAKKTLTFCDKNDGINSFFAGATDIILTARKIFIAILVVAAIIACVPMAWQEIRRWHTMKERSQLVRKEAHDPMDVVYIVSRPHTAAIGIKAASRFSNSRRQILVRWVIAYATSPAALFVLLLALAGLLSCLCQFILLSAVKRTVPELSNEVGDFAEEVVDVLQNTSAQWANDANKVIQNVDDELNDHVFGWVNTSTGALNDTLNTFVNKTIGVLNDTFGGTLLYEPLLDVFDCLVGLKVESVQKGLTWVSDHAHIDFPLLPNDTFSRGAEGSLNSSDASESFLADAGDETSNKITEVVYKVISALEKALLIEVIIASCILLVWVINAMFGIIRALTLFWGRDKNRGEGGPAPPNSRPNPGSGPDSHGFIDVPLTSLPSHRDADETAARSQPAPRYEVATSQGSSAAVVSSELEYPDEKVGFAGQRNALRVDGVSDLRGSSYVEYGIEKY</sequence>
<proteinExistence type="inferred from homology"/>
<feature type="chain" id="PRO_0000337270" description="Plasma membrane fusion protein prm1">
    <location>
        <begin position="1"/>
        <end position="739"/>
    </location>
</feature>
<feature type="topological domain" description="Extracellular" evidence="1">
    <location>
        <begin position="1"/>
        <end position="49"/>
    </location>
</feature>
<feature type="transmembrane region" description="Helical" evidence="2">
    <location>
        <begin position="50"/>
        <end position="70"/>
    </location>
</feature>
<feature type="topological domain" description="Cytoplasmic" evidence="1">
    <location>
        <begin position="71"/>
        <end position="149"/>
    </location>
</feature>
<feature type="transmembrane region" description="Helical" evidence="2">
    <location>
        <begin position="150"/>
        <end position="169"/>
    </location>
</feature>
<feature type="topological domain" description="Extracellular" evidence="1">
    <location>
        <begin position="170"/>
        <end position="320"/>
    </location>
</feature>
<feature type="transmembrane region" description="Helical" evidence="2">
    <location>
        <begin position="321"/>
        <end position="341"/>
    </location>
</feature>
<feature type="topological domain" description="Cytoplasmic" evidence="1">
    <location>
        <begin position="342"/>
        <end position="395"/>
    </location>
</feature>
<feature type="transmembrane region" description="Helical" evidence="2">
    <location>
        <begin position="396"/>
        <end position="418"/>
    </location>
</feature>
<feature type="topological domain" description="Extracellular" evidence="1">
    <location>
        <begin position="419"/>
        <end position="598"/>
    </location>
</feature>
<feature type="transmembrane region" description="Helical" evidence="2">
    <location>
        <begin position="599"/>
        <end position="619"/>
    </location>
</feature>
<feature type="topological domain" description="Cytoplasmic" evidence="1">
    <location>
        <begin position="620"/>
        <end position="739"/>
    </location>
</feature>
<feature type="region of interest" description="Disordered" evidence="3">
    <location>
        <begin position="636"/>
        <end position="693"/>
    </location>
</feature>
<feature type="glycosylation site" description="N-linked (GlcNAc...) asparagine" evidence="2">
    <location>
        <position position="177"/>
    </location>
</feature>
<feature type="glycosylation site" description="N-linked (GlcNAc...) asparagine" evidence="2">
    <location>
        <position position="220"/>
    </location>
</feature>
<feature type="glycosylation site" description="N-linked (GlcNAc...) asparagine" evidence="2">
    <location>
        <position position="245"/>
    </location>
</feature>
<feature type="glycosylation site" description="N-linked (GlcNAc...) asparagine" evidence="2">
    <location>
        <position position="256"/>
    </location>
</feature>
<feature type="glycosylation site" description="N-linked (GlcNAc...) asparagine" evidence="2">
    <location>
        <position position="274"/>
    </location>
</feature>
<feature type="glycosylation site" description="N-linked (GlcNAc...) asparagine" evidence="2">
    <location>
        <position position="279"/>
    </location>
</feature>
<feature type="glycosylation site" description="N-linked (GlcNAc...) asparagine" evidence="2">
    <location>
        <position position="283"/>
    </location>
</feature>
<feature type="glycosylation site" description="N-linked (GlcNAc...) asparagine" evidence="2">
    <location>
        <position position="454"/>
    </location>
</feature>
<feature type="glycosylation site" description="N-linked (GlcNAc...) asparagine" evidence="2">
    <location>
        <position position="483"/>
    </location>
</feature>
<feature type="glycosylation site" description="N-linked (GlcNAc...) asparagine" evidence="2">
    <location>
        <position position="490"/>
    </location>
</feature>
<feature type="glycosylation site" description="N-linked (GlcNAc...) asparagine" evidence="2">
    <location>
        <position position="498"/>
    </location>
</feature>
<feature type="glycosylation site" description="N-linked (GlcNAc...) asparagine" evidence="2">
    <location>
        <position position="505"/>
    </location>
</feature>
<feature type="glycosylation site" description="N-linked (GlcNAc...) asparagine" evidence="2">
    <location>
        <position position="552"/>
    </location>
</feature>
<feature type="glycosylation site" description="N-linked (GlcNAc...) asparagine" evidence="2">
    <location>
        <position position="564"/>
    </location>
</feature>
<gene>
    <name type="primary">prm1</name>
    <name type="ORF">An04g05460</name>
</gene>
<evidence type="ECO:0000250" key="1"/>
<evidence type="ECO:0000255" key="2"/>
<evidence type="ECO:0000256" key="3">
    <source>
        <dbReference type="SAM" id="MobiDB-lite"/>
    </source>
</evidence>
<evidence type="ECO:0000305" key="4"/>
<name>PRM1_ASPNC</name>
<dbReference type="EMBL" id="AM270078">
    <property type="protein sequence ID" value="CAK38808.1"/>
    <property type="molecule type" value="Genomic_DNA"/>
</dbReference>
<dbReference type="RefSeq" id="XP_001401910.1">
    <property type="nucleotide sequence ID" value="XM_001401873.1"/>
</dbReference>
<dbReference type="GlyCosmos" id="A2QJ14">
    <property type="glycosylation" value="14 sites, No reported glycans"/>
</dbReference>
<dbReference type="EnsemblFungi" id="CAK38808">
    <property type="protein sequence ID" value="CAK38808"/>
    <property type="gene ID" value="An04g05460"/>
</dbReference>
<dbReference type="GeneID" id="4990953"/>
<dbReference type="KEGG" id="ang:An04g05460"/>
<dbReference type="VEuPathDB" id="FungiDB:An04g05460"/>
<dbReference type="HOGENOM" id="CLU_010191_1_0_1"/>
<dbReference type="Proteomes" id="UP000006706">
    <property type="component" value="Chromosome 6L"/>
</dbReference>
<dbReference type="GO" id="GO:0043332">
    <property type="term" value="C:mating projection tip"/>
    <property type="evidence" value="ECO:0007669"/>
    <property type="project" value="InterPro"/>
</dbReference>
<dbReference type="GO" id="GO:0005886">
    <property type="term" value="C:plasma membrane"/>
    <property type="evidence" value="ECO:0007669"/>
    <property type="project" value="UniProtKB-SubCell"/>
</dbReference>
<dbReference type="GO" id="GO:0032220">
    <property type="term" value="P:plasma membrane fusion involved in cytogamy"/>
    <property type="evidence" value="ECO:0007669"/>
    <property type="project" value="TreeGrafter"/>
</dbReference>
<dbReference type="InterPro" id="IPR026777">
    <property type="entry name" value="PRM1"/>
</dbReference>
<dbReference type="PANTHER" id="PTHR31030">
    <property type="entry name" value="PLASMA MEMBRANE FUSION PROTEIN PRM1"/>
    <property type="match status" value="1"/>
</dbReference>
<dbReference type="PANTHER" id="PTHR31030:SF1">
    <property type="entry name" value="PLASMA MEMBRANE FUSION PROTEIN PRM1"/>
    <property type="match status" value="1"/>
</dbReference>
<reference key="1">
    <citation type="journal article" date="2007" name="Nat. Biotechnol.">
        <title>Genome sequencing and analysis of the versatile cell factory Aspergillus niger CBS 513.88.</title>
        <authorList>
            <person name="Pel H.J."/>
            <person name="de Winde J.H."/>
            <person name="Archer D.B."/>
            <person name="Dyer P.S."/>
            <person name="Hofmann G."/>
            <person name="Schaap P.J."/>
            <person name="Turner G."/>
            <person name="de Vries R.P."/>
            <person name="Albang R."/>
            <person name="Albermann K."/>
            <person name="Andersen M.R."/>
            <person name="Bendtsen J.D."/>
            <person name="Benen J.A.E."/>
            <person name="van den Berg M."/>
            <person name="Breestraat S."/>
            <person name="Caddick M.X."/>
            <person name="Contreras R."/>
            <person name="Cornell M."/>
            <person name="Coutinho P.M."/>
            <person name="Danchin E.G.J."/>
            <person name="Debets A.J.M."/>
            <person name="Dekker P."/>
            <person name="van Dijck P.W.M."/>
            <person name="van Dijk A."/>
            <person name="Dijkhuizen L."/>
            <person name="Driessen A.J.M."/>
            <person name="d'Enfert C."/>
            <person name="Geysens S."/>
            <person name="Goosen C."/>
            <person name="Groot G.S.P."/>
            <person name="de Groot P.W.J."/>
            <person name="Guillemette T."/>
            <person name="Henrissat B."/>
            <person name="Herweijer M."/>
            <person name="van den Hombergh J.P.T.W."/>
            <person name="van den Hondel C.A.M.J.J."/>
            <person name="van der Heijden R.T.J.M."/>
            <person name="van der Kaaij R.M."/>
            <person name="Klis F.M."/>
            <person name="Kools H.J."/>
            <person name="Kubicek C.P."/>
            <person name="van Kuyk P.A."/>
            <person name="Lauber J."/>
            <person name="Lu X."/>
            <person name="van der Maarel M.J.E.C."/>
            <person name="Meulenberg R."/>
            <person name="Menke H."/>
            <person name="Mortimer M.A."/>
            <person name="Nielsen J."/>
            <person name="Oliver S.G."/>
            <person name="Olsthoorn M."/>
            <person name="Pal K."/>
            <person name="van Peij N.N.M.E."/>
            <person name="Ram A.F.J."/>
            <person name="Rinas U."/>
            <person name="Roubos J.A."/>
            <person name="Sagt C.M.J."/>
            <person name="Schmoll M."/>
            <person name="Sun J."/>
            <person name="Ussery D."/>
            <person name="Varga J."/>
            <person name="Vervecken W."/>
            <person name="van de Vondervoort P.J.J."/>
            <person name="Wedler H."/>
            <person name="Woesten H.A.B."/>
            <person name="Zeng A.-P."/>
            <person name="van Ooyen A.J.J."/>
            <person name="Visser J."/>
            <person name="Stam H."/>
        </authorList>
    </citation>
    <scope>NUCLEOTIDE SEQUENCE [LARGE SCALE GENOMIC DNA]</scope>
    <source>
        <strain>ATCC MYA-4892 / CBS 513.88 / FGSC A1513</strain>
    </source>
</reference>
<keyword id="KW-1003">Cell membrane</keyword>
<keyword id="KW-0184">Conjugation</keyword>
<keyword id="KW-0325">Glycoprotein</keyword>
<keyword id="KW-0472">Membrane</keyword>
<keyword id="KW-1185">Reference proteome</keyword>
<keyword id="KW-0812">Transmembrane</keyword>
<keyword id="KW-1133">Transmembrane helix</keyword>
<accession>A2QJ14</accession>